<name>TX17F_TETBN</name>
<sequence length="59" mass="6845">MEKNRTTTFSVYLTIILFLISTFITMVITESNIIRVPEFQCPNGYRKDANGKCREVFHG</sequence>
<protein>
    <recommendedName>
        <fullName evidence="3">U17-myrmicitoxin-Tb1f</fullName>
        <shortName evidence="3">U17-MYRTX-Tb1f</shortName>
    </recommendedName>
</protein>
<keyword id="KW-0027">Amidation</keyword>
<keyword id="KW-0903">Direct protein sequencing</keyword>
<keyword id="KW-0964">Secreted</keyword>
<keyword id="KW-0732">Signal</keyword>
<evidence type="ECO:0000255" key="1"/>
<evidence type="ECO:0000269" key="2">
    <source>
    </source>
</evidence>
<evidence type="ECO:0000303" key="3">
    <source>
    </source>
</evidence>
<evidence type="ECO:0000305" key="4">
    <source>
    </source>
</evidence>
<evidence type="ECO:0000312" key="5">
    <source>
        <dbReference type="EMBL" id="QJZ31629.1"/>
    </source>
</evidence>
<feature type="signal peptide" evidence="1">
    <location>
        <begin position="1"/>
        <end position="27"/>
    </location>
</feature>
<feature type="propeptide" id="PRO_0000453049" evidence="4">
    <location>
        <begin position="28"/>
        <end position="31"/>
    </location>
</feature>
<feature type="peptide" id="PRO_0000453050" description="U17-myrmicitoxin-Tb1f" evidence="2">
    <location>
        <begin position="32"/>
        <end position="58"/>
    </location>
</feature>
<feature type="modified residue" description="Histidine amide" evidence="2">
    <location>
        <position position="58"/>
    </location>
</feature>
<comment type="subcellular location">
    <subcellularLocation>
        <location evidence="2">Secreted</location>
    </subcellularLocation>
</comment>
<comment type="tissue specificity">
    <text evidence="2">Expressed by the venom gland.</text>
</comment>
<comment type="mass spectrometry" mass="3186.6" method="Electrospray" evidence="2"/>
<accession>A0A6M6R9M4</accession>
<dbReference type="EMBL" id="MN450162">
    <property type="protein sequence ID" value="QJZ31629.1"/>
    <property type="molecule type" value="mRNA"/>
</dbReference>
<dbReference type="GO" id="GO:0005576">
    <property type="term" value="C:extracellular region"/>
    <property type="evidence" value="ECO:0000314"/>
    <property type="project" value="UniProtKB"/>
</dbReference>
<proteinExistence type="evidence at protein level"/>
<organism evidence="5">
    <name type="scientific">Tetramorium bicarinatum</name>
    <name type="common">Tramp ant</name>
    <dbReference type="NCBI Taxonomy" id="219812"/>
    <lineage>
        <taxon>Eukaryota</taxon>
        <taxon>Metazoa</taxon>
        <taxon>Ecdysozoa</taxon>
        <taxon>Arthropoda</taxon>
        <taxon>Hexapoda</taxon>
        <taxon>Insecta</taxon>
        <taxon>Pterygota</taxon>
        <taxon>Neoptera</taxon>
        <taxon>Endopterygota</taxon>
        <taxon>Hymenoptera</taxon>
        <taxon>Apocrita</taxon>
        <taxon>Aculeata</taxon>
        <taxon>Formicoidea</taxon>
        <taxon>Formicidae</taxon>
        <taxon>Myrmicinae</taxon>
        <taxon>Tetramorium</taxon>
    </lineage>
</organism>
<reference evidence="5" key="1">
    <citation type="journal article" date="2018" name="J. Proteome Res.">
        <title>Deciphering the Molecular Diversity of an Ant Venom Peptidome through a Venomics Approach.</title>
        <authorList>
            <person name="Touchard A."/>
            <person name="Tene N."/>
            <person name="Song P.C.T."/>
            <person name="Lefranc B."/>
            <person name="Leprince J."/>
            <person name="Treilhou M."/>
            <person name="Bonnafe E."/>
        </authorList>
    </citation>
    <scope>NUCLEOTIDE SEQUENCE [MRNA]</scope>
    <scope>PROTEIN SEQUENCE OF 32-58</scope>
    <scope>SUBCELLULAR LOCATION</scope>
    <scope>TISSUE SPECIFICITY</scope>
    <scope>MASS SPECTROMETRY</scope>
    <scope>AMIDATION AT HIS-58</scope>
    <source>
        <tissue evidence="2">Venom duct</tissue>
    </source>
</reference>